<name>EFG_LACLM</name>
<proteinExistence type="inferred from homology"/>
<keyword id="KW-0963">Cytoplasm</keyword>
<keyword id="KW-0251">Elongation factor</keyword>
<keyword id="KW-0342">GTP-binding</keyword>
<keyword id="KW-0547">Nucleotide-binding</keyword>
<keyword id="KW-0648">Protein biosynthesis</keyword>
<feature type="chain" id="PRO_1000008839" description="Elongation factor G">
    <location>
        <begin position="1"/>
        <end position="709"/>
    </location>
</feature>
<feature type="domain" description="tr-type G">
    <location>
        <begin position="8"/>
        <end position="297"/>
    </location>
</feature>
<feature type="binding site" evidence="1">
    <location>
        <begin position="17"/>
        <end position="24"/>
    </location>
    <ligand>
        <name>GTP</name>
        <dbReference type="ChEBI" id="CHEBI:37565"/>
    </ligand>
</feature>
<feature type="binding site" evidence="1">
    <location>
        <begin position="81"/>
        <end position="85"/>
    </location>
    <ligand>
        <name>GTP</name>
        <dbReference type="ChEBI" id="CHEBI:37565"/>
    </ligand>
</feature>
<feature type="binding site" evidence="1">
    <location>
        <begin position="135"/>
        <end position="138"/>
    </location>
    <ligand>
        <name>GTP</name>
        <dbReference type="ChEBI" id="CHEBI:37565"/>
    </ligand>
</feature>
<gene>
    <name evidence="1" type="primary">fusA</name>
    <name type="ordered locus">llmg_2556</name>
</gene>
<protein>
    <recommendedName>
        <fullName evidence="1">Elongation factor G</fullName>
        <shortName evidence="1">EF-G</shortName>
    </recommendedName>
</protein>
<comment type="function">
    <text evidence="1">Catalyzes the GTP-dependent ribosomal translocation step during translation elongation. During this step, the ribosome changes from the pre-translocational (PRE) to the post-translocational (POST) state as the newly formed A-site-bound peptidyl-tRNA and P-site-bound deacylated tRNA move to the P and E sites, respectively. Catalyzes the coordinated movement of the two tRNA molecules, the mRNA and conformational changes in the ribosome.</text>
</comment>
<comment type="subcellular location">
    <subcellularLocation>
        <location evidence="1">Cytoplasm</location>
    </subcellularLocation>
</comment>
<comment type="similarity">
    <text evidence="1">Belongs to the TRAFAC class translation factor GTPase superfamily. Classic translation factor GTPase family. EF-G/EF-2 subfamily.</text>
</comment>
<organism>
    <name type="scientific">Lactococcus lactis subsp. cremoris (strain MG1363)</name>
    <dbReference type="NCBI Taxonomy" id="416870"/>
    <lineage>
        <taxon>Bacteria</taxon>
        <taxon>Bacillati</taxon>
        <taxon>Bacillota</taxon>
        <taxon>Bacilli</taxon>
        <taxon>Lactobacillales</taxon>
        <taxon>Streptococcaceae</taxon>
        <taxon>Lactococcus</taxon>
        <taxon>Lactococcus cremoris subsp. cremoris</taxon>
    </lineage>
</organism>
<accession>A2RP72</accession>
<dbReference type="EMBL" id="AM406671">
    <property type="protein sequence ID" value="CAL99118.1"/>
    <property type="molecule type" value="Genomic_DNA"/>
</dbReference>
<dbReference type="RefSeq" id="WP_011836173.1">
    <property type="nucleotide sequence ID" value="NC_009004.1"/>
</dbReference>
<dbReference type="SMR" id="A2RP72"/>
<dbReference type="STRING" id="416870.llmg_2556"/>
<dbReference type="GeneID" id="61110607"/>
<dbReference type="KEGG" id="llm:llmg_2556"/>
<dbReference type="eggNOG" id="COG0480">
    <property type="taxonomic scope" value="Bacteria"/>
</dbReference>
<dbReference type="HOGENOM" id="CLU_002794_4_1_9"/>
<dbReference type="OrthoDB" id="9804431at2"/>
<dbReference type="PhylomeDB" id="A2RP72"/>
<dbReference type="Proteomes" id="UP000000364">
    <property type="component" value="Chromosome"/>
</dbReference>
<dbReference type="GO" id="GO:0005737">
    <property type="term" value="C:cytoplasm"/>
    <property type="evidence" value="ECO:0007669"/>
    <property type="project" value="UniProtKB-SubCell"/>
</dbReference>
<dbReference type="GO" id="GO:0005525">
    <property type="term" value="F:GTP binding"/>
    <property type="evidence" value="ECO:0007669"/>
    <property type="project" value="UniProtKB-UniRule"/>
</dbReference>
<dbReference type="GO" id="GO:0003924">
    <property type="term" value="F:GTPase activity"/>
    <property type="evidence" value="ECO:0007669"/>
    <property type="project" value="InterPro"/>
</dbReference>
<dbReference type="GO" id="GO:0003746">
    <property type="term" value="F:translation elongation factor activity"/>
    <property type="evidence" value="ECO:0007669"/>
    <property type="project" value="UniProtKB-UniRule"/>
</dbReference>
<dbReference type="GO" id="GO:0032790">
    <property type="term" value="P:ribosome disassembly"/>
    <property type="evidence" value="ECO:0007669"/>
    <property type="project" value="TreeGrafter"/>
</dbReference>
<dbReference type="CDD" id="cd01886">
    <property type="entry name" value="EF-G"/>
    <property type="match status" value="1"/>
</dbReference>
<dbReference type="CDD" id="cd16262">
    <property type="entry name" value="EFG_III"/>
    <property type="match status" value="1"/>
</dbReference>
<dbReference type="CDD" id="cd01434">
    <property type="entry name" value="EFG_mtEFG1_IV"/>
    <property type="match status" value="1"/>
</dbReference>
<dbReference type="CDD" id="cd03713">
    <property type="entry name" value="EFG_mtEFG_C"/>
    <property type="match status" value="1"/>
</dbReference>
<dbReference type="CDD" id="cd04088">
    <property type="entry name" value="EFG_mtEFG_II"/>
    <property type="match status" value="1"/>
</dbReference>
<dbReference type="FunFam" id="2.40.30.10:FF:000006">
    <property type="entry name" value="Elongation factor G"/>
    <property type="match status" value="1"/>
</dbReference>
<dbReference type="FunFam" id="3.30.230.10:FF:000003">
    <property type="entry name" value="Elongation factor G"/>
    <property type="match status" value="1"/>
</dbReference>
<dbReference type="FunFam" id="3.30.70.240:FF:000001">
    <property type="entry name" value="Elongation factor G"/>
    <property type="match status" value="1"/>
</dbReference>
<dbReference type="FunFam" id="3.30.70.870:FF:000001">
    <property type="entry name" value="Elongation factor G"/>
    <property type="match status" value="1"/>
</dbReference>
<dbReference type="FunFam" id="3.40.50.300:FF:000029">
    <property type="entry name" value="Elongation factor G"/>
    <property type="match status" value="1"/>
</dbReference>
<dbReference type="Gene3D" id="3.30.230.10">
    <property type="match status" value="1"/>
</dbReference>
<dbReference type="Gene3D" id="3.30.70.240">
    <property type="match status" value="1"/>
</dbReference>
<dbReference type="Gene3D" id="3.30.70.870">
    <property type="entry name" value="Elongation Factor G (Translational Gtpase), domain 3"/>
    <property type="match status" value="1"/>
</dbReference>
<dbReference type="Gene3D" id="3.40.50.300">
    <property type="entry name" value="P-loop containing nucleotide triphosphate hydrolases"/>
    <property type="match status" value="1"/>
</dbReference>
<dbReference type="Gene3D" id="2.40.30.10">
    <property type="entry name" value="Translation factors"/>
    <property type="match status" value="1"/>
</dbReference>
<dbReference type="HAMAP" id="MF_00054_B">
    <property type="entry name" value="EF_G_EF_2_B"/>
    <property type="match status" value="1"/>
</dbReference>
<dbReference type="InterPro" id="IPR053905">
    <property type="entry name" value="EF-G-like_DII"/>
</dbReference>
<dbReference type="InterPro" id="IPR041095">
    <property type="entry name" value="EFG_II"/>
</dbReference>
<dbReference type="InterPro" id="IPR009022">
    <property type="entry name" value="EFG_III"/>
</dbReference>
<dbReference type="InterPro" id="IPR035647">
    <property type="entry name" value="EFG_III/V"/>
</dbReference>
<dbReference type="InterPro" id="IPR047872">
    <property type="entry name" value="EFG_IV"/>
</dbReference>
<dbReference type="InterPro" id="IPR035649">
    <property type="entry name" value="EFG_V"/>
</dbReference>
<dbReference type="InterPro" id="IPR000640">
    <property type="entry name" value="EFG_V-like"/>
</dbReference>
<dbReference type="InterPro" id="IPR031157">
    <property type="entry name" value="G_TR_CS"/>
</dbReference>
<dbReference type="InterPro" id="IPR027417">
    <property type="entry name" value="P-loop_NTPase"/>
</dbReference>
<dbReference type="InterPro" id="IPR020568">
    <property type="entry name" value="Ribosomal_Su5_D2-typ_SF"/>
</dbReference>
<dbReference type="InterPro" id="IPR014721">
    <property type="entry name" value="Ribsml_uS5_D2-typ_fold_subgr"/>
</dbReference>
<dbReference type="InterPro" id="IPR005225">
    <property type="entry name" value="Small_GTP-bd"/>
</dbReference>
<dbReference type="InterPro" id="IPR000795">
    <property type="entry name" value="T_Tr_GTP-bd_dom"/>
</dbReference>
<dbReference type="InterPro" id="IPR009000">
    <property type="entry name" value="Transl_B-barrel_sf"/>
</dbReference>
<dbReference type="InterPro" id="IPR004540">
    <property type="entry name" value="Transl_elong_EFG/EF2"/>
</dbReference>
<dbReference type="InterPro" id="IPR005517">
    <property type="entry name" value="Transl_elong_EFG/EF2_IV"/>
</dbReference>
<dbReference type="NCBIfam" id="TIGR00484">
    <property type="entry name" value="EF-G"/>
    <property type="match status" value="1"/>
</dbReference>
<dbReference type="NCBIfam" id="NF009379">
    <property type="entry name" value="PRK12740.1-3"/>
    <property type="match status" value="1"/>
</dbReference>
<dbReference type="NCBIfam" id="NF009381">
    <property type="entry name" value="PRK12740.1-5"/>
    <property type="match status" value="1"/>
</dbReference>
<dbReference type="NCBIfam" id="TIGR00231">
    <property type="entry name" value="small_GTP"/>
    <property type="match status" value="1"/>
</dbReference>
<dbReference type="PANTHER" id="PTHR43261:SF1">
    <property type="entry name" value="RIBOSOME-RELEASING FACTOR 2, MITOCHONDRIAL"/>
    <property type="match status" value="1"/>
</dbReference>
<dbReference type="PANTHER" id="PTHR43261">
    <property type="entry name" value="TRANSLATION ELONGATION FACTOR G-RELATED"/>
    <property type="match status" value="1"/>
</dbReference>
<dbReference type="Pfam" id="PF22042">
    <property type="entry name" value="EF-G_D2"/>
    <property type="match status" value="1"/>
</dbReference>
<dbReference type="Pfam" id="PF00679">
    <property type="entry name" value="EFG_C"/>
    <property type="match status" value="1"/>
</dbReference>
<dbReference type="Pfam" id="PF14492">
    <property type="entry name" value="EFG_III"/>
    <property type="match status" value="1"/>
</dbReference>
<dbReference type="Pfam" id="PF03764">
    <property type="entry name" value="EFG_IV"/>
    <property type="match status" value="1"/>
</dbReference>
<dbReference type="Pfam" id="PF00009">
    <property type="entry name" value="GTP_EFTU"/>
    <property type="match status" value="1"/>
</dbReference>
<dbReference type="PRINTS" id="PR00315">
    <property type="entry name" value="ELONGATNFCT"/>
</dbReference>
<dbReference type="SMART" id="SM00838">
    <property type="entry name" value="EFG_C"/>
    <property type="match status" value="1"/>
</dbReference>
<dbReference type="SMART" id="SM00889">
    <property type="entry name" value="EFG_IV"/>
    <property type="match status" value="1"/>
</dbReference>
<dbReference type="SUPFAM" id="SSF54980">
    <property type="entry name" value="EF-G C-terminal domain-like"/>
    <property type="match status" value="2"/>
</dbReference>
<dbReference type="SUPFAM" id="SSF52540">
    <property type="entry name" value="P-loop containing nucleoside triphosphate hydrolases"/>
    <property type="match status" value="1"/>
</dbReference>
<dbReference type="SUPFAM" id="SSF54211">
    <property type="entry name" value="Ribosomal protein S5 domain 2-like"/>
    <property type="match status" value="1"/>
</dbReference>
<dbReference type="SUPFAM" id="SSF50447">
    <property type="entry name" value="Translation proteins"/>
    <property type="match status" value="1"/>
</dbReference>
<dbReference type="PROSITE" id="PS00301">
    <property type="entry name" value="G_TR_1"/>
    <property type="match status" value="1"/>
</dbReference>
<dbReference type="PROSITE" id="PS51722">
    <property type="entry name" value="G_TR_2"/>
    <property type="match status" value="1"/>
</dbReference>
<sequence length="709" mass="77972">MAREFSLANTRNIGIMAHVDAGKTTTTERVLYYTGKIHKIGETHEGASQMDWMEQEQERGITITSAATTAEWKGNRVNIIDTPGHVDFTIEVQRSLRVLDGAVTVLDAQSGVEPQTETVWRQATEYGVPRIVFANKMDKIGADFYYSLSTLGDRLGANAHPIQIPIGAEDDFIGIIDLVTMKSEIYTNDLGTDIKETVVGSDEFNAELASLDFNAEEYTELANEWREKLIEAIADFDEDIMEKYFAGEEIPEAELKAAIRKATINVDFYPMLAGSAFKNKGVQMMLDAVIDYLPSPLDIPAIQGVNPDTDEEDERPASDEEPFAALAFKIMTDPFVGRLSFFRVYSGTLDAGSYVLNTSKGKRERIGRILQMHANTRKEIQTVYAGDIAAAVGLKNTTTGDSLTDEKAKIILESIEVPEPVIQLMVEPKTKADQDKMGVALQKLAEEDPTFRVETNPETGETVISGMGELHLDVLVDRMKREFKVEANVGAPQVAYRETFRAGTSARGFFKRQSGGKGQYGDVWIEFTPNEEGAGFEFENAIVGGVVPREFVPAVEKGLVETMANGVLAGYPMVDIKAKLYDGSYHDVDSSETAFKVAASLAMKEAAKTAKPAILEPMMKVTITVPEENLGDIMGHVTARRGQVNSMEAHGKSQIVNAFVPLAEMFGYATTLRSSTQGRGTFMMVFDHYSDVPKSVQEEIIAKNGRNAD</sequence>
<evidence type="ECO:0000255" key="1">
    <source>
        <dbReference type="HAMAP-Rule" id="MF_00054"/>
    </source>
</evidence>
<reference key="1">
    <citation type="journal article" date="2007" name="J. Bacteriol.">
        <title>The complete genome sequence of the lactic acid bacterial paradigm Lactococcus lactis subsp. cremoris MG1363.</title>
        <authorList>
            <person name="Wegmann U."/>
            <person name="O'Connell-Motherway M."/>
            <person name="Zomer A."/>
            <person name="Buist G."/>
            <person name="Shearman C."/>
            <person name="Canchaya C."/>
            <person name="Ventura M."/>
            <person name="Goesmann A."/>
            <person name="Gasson M.J."/>
            <person name="Kuipers O.P."/>
            <person name="van Sinderen D."/>
            <person name="Kok J."/>
        </authorList>
    </citation>
    <scope>NUCLEOTIDE SEQUENCE [LARGE SCALE GENOMIC DNA]</scope>
    <source>
        <strain>MG1363</strain>
    </source>
</reference>